<accession>Q09127</accession>
<gene>
    <name type="primary">rpl1001</name>
    <name type="synonym">rpl10</name>
    <name type="synonym">rpl10a</name>
    <name type="ORF">SPBC18E5.04</name>
</gene>
<organism>
    <name type="scientific">Schizosaccharomyces pombe (strain 972 / ATCC 24843)</name>
    <name type="common">Fission yeast</name>
    <dbReference type="NCBI Taxonomy" id="284812"/>
    <lineage>
        <taxon>Eukaryota</taxon>
        <taxon>Fungi</taxon>
        <taxon>Dikarya</taxon>
        <taxon>Ascomycota</taxon>
        <taxon>Taphrinomycotina</taxon>
        <taxon>Schizosaccharomycetes</taxon>
        <taxon>Schizosaccharomycetales</taxon>
        <taxon>Schizosaccharomycetaceae</taxon>
        <taxon>Schizosaccharomyces</taxon>
    </lineage>
</organism>
<sequence length="221" mass="25373">MARRPARCYRYCKNKPYPKSRYNRAVPDSKIRIFDLGRKRAGVDEFPLCIHLVSNEYEQITSEALEAARICANKYLVKIGGKDSFHLRVRAHPFHVVRINKMLSCAGADRLQTGMRHAFGKPNGLVARVNIGQILMSVRTKDSSRATAIEALRRCQYKFPGQQRIIVSKKWGFSQYARDEYIEKRSRGEIIPDGCYAKFLNKRGSLQEKLDLFPEASFNLA</sequence>
<dbReference type="EMBL" id="U33214">
    <property type="protein sequence ID" value="AAB03806.1"/>
    <property type="molecule type" value="mRNA"/>
</dbReference>
<dbReference type="EMBL" id="CU329671">
    <property type="protein sequence ID" value="CAA22664.1"/>
    <property type="molecule type" value="Genomic_DNA"/>
</dbReference>
<dbReference type="PIR" id="JC4755">
    <property type="entry name" value="JC4755"/>
</dbReference>
<dbReference type="RefSeq" id="NP_595850.1">
    <property type="nucleotide sequence ID" value="NM_001021754.2"/>
</dbReference>
<dbReference type="PDB" id="8EUG">
    <property type="method" value="EM"/>
    <property type="resolution" value="2.80 A"/>
    <property type="chains" value="I=1-221"/>
</dbReference>
<dbReference type="PDB" id="8EUI">
    <property type="method" value="EM"/>
    <property type="resolution" value="3.10 A"/>
    <property type="chains" value="I=1-221"/>
</dbReference>
<dbReference type="PDB" id="9AXT">
    <property type="method" value="EM"/>
    <property type="resolution" value="2.40 A"/>
    <property type="chains" value="BV=1-221"/>
</dbReference>
<dbReference type="PDB" id="9AXU">
    <property type="method" value="EM"/>
    <property type="resolution" value="1.94 A"/>
    <property type="chains" value="V=1-221"/>
</dbReference>
<dbReference type="PDB" id="9AXV">
    <property type="method" value="EM"/>
    <property type="resolution" value="2.40 A"/>
    <property type="chains" value="BV=1-221"/>
</dbReference>
<dbReference type="PDBsum" id="8EUG"/>
<dbReference type="PDBsum" id="8EUI"/>
<dbReference type="PDBsum" id="9AXT"/>
<dbReference type="PDBsum" id="9AXU"/>
<dbReference type="PDBsum" id="9AXV"/>
<dbReference type="EMDB" id="EMD-43972"/>
<dbReference type="EMDB" id="EMD-43973"/>
<dbReference type="EMDB" id="EMD-43976"/>
<dbReference type="SMR" id="Q09127"/>
<dbReference type="BioGRID" id="277314">
    <property type="interactions" value="3"/>
</dbReference>
<dbReference type="FunCoup" id="Q09127">
    <property type="interactions" value="348"/>
</dbReference>
<dbReference type="STRING" id="284812.Q09127"/>
<dbReference type="iPTMnet" id="Q09127"/>
<dbReference type="PaxDb" id="4896-SPBC18E5.04.1"/>
<dbReference type="EnsemblFungi" id="SPBC18E5.04.1">
    <property type="protein sequence ID" value="SPBC18E5.04.1:pep"/>
    <property type="gene ID" value="SPBC18E5.04"/>
</dbReference>
<dbReference type="GeneID" id="2540795"/>
<dbReference type="KEGG" id="spo:2540795"/>
<dbReference type="PomBase" id="SPBC18E5.04">
    <property type="gene designation" value="rpl1001"/>
</dbReference>
<dbReference type="VEuPathDB" id="FungiDB:SPBC18E5.04"/>
<dbReference type="eggNOG" id="KOG0857">
    <property type="taxonomic scope" value="Eukaryota"/>
</dbReference>
<dbReference type="HOGENOM" id="CLU_084051_0_0_1"/>
<dbReference type="InParanoid" id="Q09127"/>
<dbReference type="OMA" id="HHVIREN"/>
<dbReference type="PhylomeDB" id="Q09127"/>
<dbReference type="Reactome" id="R-SPO-156827">
    <property type="pathway name" value="L13a-mediated translational silencing of Ceruloplasmin expression"/>
</dbReference>
<dbReference type="Reactome" id="R-SPO-1799339">
    <property type="pathway name" value="SRP-dependent cotranslational protein targeting to membrane"/>
</dbReference>
<dbReference type="Reactome" id="R-SPO-72689">
    <property type="pathway name" value="Formation of a pool of free 40S subunits"/>
</dbReference>
<dbReference type="Reactome" id="R-SPO-72706">
    <property type="pathway name" value="GTP hydrolysis and joining of the 60S ribosomal subunit"/>
</dbReference>
<dbReference type="Reactome" id="R-SPO-975956">
    <property type="pathway name" value="Nonsense Mediated Decay (NMD) independent of the Exon Junction Complex (EJC)"/>
</dbReference>
<dbReference type="Reactome" id="R-SPO-975957">
    <property type="pathway name" value="Nonsense Mediated Decay (NMD) enhanced by the Exon Junction Complex (EJC)"/>
</dbReference>
<dbReference type="PRO" id="PR:Q09127"/>
<dbReference type="Proteomes" id="UP000002485">
    <property type="component" value="Chromosome II"/>
</dbReference>
<dbReference type="GO" id="GO:0005829">
    <property type="term" value="C:cytosol"/>
    <property type="evidence" value="ECO:0007005"/>
    <property type="project" value="PomBase"/>
</dbReference>
<dbReference type="GO" id="GO:0022625">
    <property type="term" value="C:cytosolic large ribosomal subunit"/>
    <property type="evidence" value="ECO:0000269"/>
    <property type="project" value="PomBase"/>
</dbReference>
<dbReference type="GO" id="GO:0003735">
    <property type="term" value="F:structural constituent of ribosome"/>
    <property type="evidence" value="ECO:0000318"/>
    <property type="project" value="GO_Central"/>
</dbReference>
<dbReference type="GO" id="GO:0002181">
    <property type="term" value="P:cytoplasmic translation"/>
    <property type="evidence" value="ECO:0000266"/>
    <property type="project" value="PomBase"/>
</dbReference>
<dbReference type="GO" id="GO:0006412">
    <property type="term" value="P:translation"/>
    <property type="evidence" value="ECO:0000318"/>
    <property type="project" value="GO_Central"/>
</dbReference>
<dbReference type="CDD" id="cd01433">
    <property type="entry name" value="Ribosomal_L16_L10e"/>
    <property type="match status" value="1"/>
</dbReference>
<dbReference type="FunFam" id="3.90.1170.10:FF:000002">
    <property type="entry name" value="60S ribosomal protein L10"/>
    <property type="match status" value="1"/>
</dbReference>
<dbReference type="Gene3D" id="3.90.1170.10">
    <property type="entry name" value="Ribosomal protein L10e/L16"/>
    <property type="match status" value="1"/>
</dbReference>
<dbReference type="InterPro" id="IPR047873">
    <property type="entry name" value="Ribosomal_uL16"/>
</dbReference>
<dbReference type="InterPro" id="IPR018255">
    <property type="entry name" value="Ribosomal_uL16_CS_euk_arc"/>
</dbReference>
<dbReference type="InterPro" id="IPR016180">
    <property type="entry name" value="Ribosomal_uL16_dom"/>
</dbReference>
<dbReference type="InterPro" id="IPR001197">
    <property type="entry name" value="Ribosomal_uL16_euk_arch"/>
</dbReference>
<dbReference type="InterPro" id="IPR036920">
    <property type="entry name" value="Ribosomal_uL16_sf"/>
</dbReference>
<dbReference type="NCBIfam" id="NF003239">
    <property type="entry name" value="PRK04199.1-4"/>
    <property type="match status" value="1"/>
</dbReference>
<dbReference type="NCBIfam" id="TIGR00279">
    <property type="entry name" value="uL16_euk_arch"/>
    <property type="match status" value="1"/>
</dbReference>
<dbReference type="PANTHER" id="PTHR11726">
    <property type="entry name" value="60S RIBOSOMAL PROTEIN L10"/>
    <property type="match status" value="1"/>
</dbReference>
<dbReference type="Pfam" id="PF00252">
    <property type="entry name" value="Ribosomal_L16"/>
    <property type="match status" value="1"/>
</dbReference>
<dbReference type="PIRSF" id="PIRSF005590">
    <property type="entry name" value="Ribosomal_L10"/>
    <property type="match status" value="1"/>
</dbReference>
<dbReference type="SUPFAM" id="SSF54686">
    <property type="entry name" value="Ribosomal protein L16p/L10e"/>
    <property type="match status" value="1"/>
</dbReference>
<dbReference type="PROSITE" id="PS01257">
    <property type="entry name" value="RIBOSOMAL_L10E"/>
    <property type="match status" value="1"/>
</dbReference>
<comment type="function">
    <text evidence="1">Component of the ribosome, a large ribonucleoprotein complex responsible for the synthesis of proteins in the cell. The small ribosomal subunit (SSU) binds messenger RNAs (mRNAs) and translates the encoded message by selecting cognate aminoacyl-transfer RNA (tRNA) molecules. The large subunit (LSU) contains the ribosomal catalytic site termed the peptidyl transferase center (PTC), which catalyzes the formation of peptide bonds, thereby polymerizing the amino acids delivered by tRNAs into a polypeptide chain. The nascent polypeptides leave the ribosome through a tunnel in the LSU and interact with protein factors that function in enzymatic processing, targeting, and the membrane insertion of nascent chains at the exit of the ribosomal tunnel.</text>
</comment>
<comment type="subunit">
    <text evidence="1">Component of the large ribosomal subunit (LSU). Mature yeast ribosomes consist of a small (40S) and a large (60S) subunit. The 40S small subunit contains 1 molecule of ribosomal RNA (18S rRNA) and at least 33 different proteins. The large 60S subunit contains 3 rRNA molecules (25S, 5.8S and 5S rRNA) and at least 46 different proteins.</text>
</comment>
<comment type="subcellular location">
    <subcellularLocation>
        <location evidence="2">Cytoplasm</location>
    </subcellularLocation>
</comment>
<comment type="miscellaneous">
    <text>There are 2 genes for uL16 in S.pombe.</text>
</comment>
<comment type="similarity">
    <text evidence="3">Belongs to the universal ribosomal protein uL16 family.</text>
</comment>
<comment type="caution">
    <text evidence="4">Was originally thought to be a transcription factor that may bind Jun homologs such as GCN4 and YAP-1, and which may inhibit DNA binding and transactivation by Jun homologs.</text>
</comment>
<name>RL10A_SCHPO</name>
<keyword id="KW-0002">3D-structure</keyword>
<keyword id="KW-0963">Cytoplasm</keyword>
<keyword id="KW-1185">Reference proteome</keyword>
<keyword id="KW-0687">Ribonucleoprotein</keyword>
<keyword id="KW-0689">Ribosomal protein</keyword>
<feature type="chain" id="PRO_0000147127" description="Large ribosomal subunit protein uL16A">
    <location>
        <begin position="1"/>
        <end position="221"/>
    </location>
</feature>
<feature type="sequence conflict" description="In Ref. 1; AAB03806." evidence="3" ref="1">
    <original>A</original>
    <variation>LRLTCNNEQCVN</variation>
    <location>
        <position position="221"/>
    </location>
</feature>
<evidence type="ECO:0000250" key="1">
    <source>
        <dbReference type="UniProtKB" id="P41805"/>
    </source>
</evidence>
<evidence type="ECO:0000269" key="2">
    <source>
    </source>
</evidence>
<evidence type="ECO:0000305" key="3"/>
<evidence type="ECO:0000305" key="4">
    <source>
    </source>
</evidence>
<protein>
    <recommendedName>
        <fullName evidence="3">Large ribosomal subunit protein uL16A</fullName>
    </recommendedName>
    <alternativeName>
        <fullName>60S ribosomal protein L10-A</fullName>
    </alternativeName>
    <alternativeName>
        <fullName>QM protein homolog</fullName>
    </alternativeName>
    <alternativeName>
        <fullName>SpQM</fullName>
    </alternativeName>
</protein>
<reference key="1">
    <citation type="journal article" date="1996" name="Gene">
        <title>The Schizosaccharomyces pombe spqM gene is a new member of the Qm transcription factor family.</title>
        <authorList>
            <person name="Masson J.-Y."/>
            <person name="Vadnais J."/>
            <person name="Ramotar D."/>
        </authorList>
    </citation>
    <scope>NUCLEOTIDE SEQUENCE [MRNA]</scope>
</reference>
<reference key="2">
    <citation type="journal article" date="2002" name="Nature">
        <title>The genome sequence of Schizosaccharomyces pombe.</title>
        <authorList>
            <person name="Wood V."/>
            <person name="Gwilliam R."/>
            <person name="Rajandream M.A."/>
            <person name="Lyne M.H."/>
            <person name="Lyne R."/>
            <person name="Stewart A."/>
            <person name="Sgouros J.G."/>
            <person name="Peat N."/>
            <person name="Hayles J."/>
            <person name="Baker S.G."/>
            <person name="Basham D."/>
            <person name="Bowman S."/>
            <person name="Brooks K."/>
            <person name="Brown D."/>
            <person name="Brown S."/>
            <person name="Chillingworth T."/>
            <person name="Churcher C.M."/>
            <person name="Collins M."/>
            <person name="Connor R."/>
            <person name="Cronin A."/>
            <person name="Davis P."/>
            <person name="Feltwell T."/>
            <person name="Fraser A."/>
            <person name="Gentles S."/>
            <person name="Goble A."/>
            <person name="Hamlin N."/>
            <person name="Harris D.E."/>
            <person name="Hidalgo J."/>
            <person name="Hodgson G."/>
            <person name="Holroyd S."/>
            <person name="Hornsby T."/>
            <person name="Howarth S."/>
            <person name="Huckle E.J."/>
            <person name="Hunt S."/>
            <person name="Jagels K."/>
            <person name="James K.D."/>
            <person name="Jones L."/>
            <person name="Jones M."/>
            <person name="Leather S."/>
            <person name="McDonald S."/>
            <person name="McLean J."/>
            <person name="Mooney P."/>
            <person name="Moule S."/>
            <person name="Mungall K.L."/>
            <person name="Murphy L.D."/>
            <person name="Niblett D."/>
            <person name="Odell C."/>
            <person name="Oliver K."/>
            <person name="O'Neil S."/>
            <person name="Pearson D."/>
            <person name="Quail M.A."/>
            <person name="Rabbinowitsch E."/>
            <person name="Rutherford K.M."/>
            <person name="Rutter S."/>
            <person name="Saunders D."/>
            <person name="Seeger K."/>
            <person name="Sharp S."/>
            <person name="Skelton J."/>
            <person name="Simmonds M.N."/>
            <person name="Squares R."/>
            <person name="Squares S."/>
            <person name="Stevens K."/>
            <person name="Taylor K."/>
            <person name="Taylor R.G."/>
            <person name="Tivey A."/>
            <person name="Walsh S.V."/>
            <person name="Warren T."/>
            <person name="Whitehead S."/>
            <person name="Woodward J.R."/>
            <person name="Volckaert G."/>
            <person name="Aert R."/>
            <person name="Robben J."/>
            <person name="Grymonprez B."/>
            <person name="Weltjens I."/>
            <person name="Vanstreels E."/>
            <person name="Rieger M."/>
            <person name="Schaefer M."/>
            <person name="Mueller-Auer S."/>
            <person name="Gabel C."/>
            <person name="Fuchs M."/>
            <person name="Duesterhoeft A."/>
            <person name="Fritzc C."/>
            <person name="Holzer E."/>
            <person name="Moestl D."/>
            <person name="Hilbert H."/>
            <person name="Borzym K."/>
            <person name="Langer I."/>
            <person name="Beck A."/>
            <person name="Lehrach H."/>
            <person name="Reinhardt R."/>
            <person name="Pohl T.M."/>
            <person name="Eger P."/>
            <person name="Zimmermann W."/>
            <person name="Wedler H."/>
            <person name="Wambutt R."/>
            <person name="Purnelle B."/>
            <person name="Goffeau A."/>
            <person name="Cadieu E."/>
            <person name="Dreano S."/>
            <person name="Gloux S."/>
            <person name="Lelaure V."/>
            <person name="Mottier S."/>
            <person name="Galibert F."/>
            <person name="Aves S.J."/>
            <person name="Xiang Z."/>
            <person name="Hunt C."/>
            <person name="Moore K."/>
            <person name="Hurst S.M."/>
            <person name="Lucas M."/>
            <person name="Rochet M."/>
            <person name="Gaillardin C."/>
            <person name="Tallada V.A."/>
            <person name="Garzon A."/>
            <person name="Thode G."/>
            <person name="Daga R.R."/>
            <person name="Cruzado L."/>
            <person name="Jimenez J."/>
            <person name="Sanchez M."/>
            <person name="del Rey F."/>
            <person name="Benito J."/>
            <person name="Dominguez A."/>
            <person name="Revuelta J.L."/>
            <person name="Moreno S."/>
            <person name="Armstrong J."/>
            <person name="Forsburg S.L."/>
            <person name="Cerutti L."/>
            <person name="Lowe T."/>
            <person name="McCombie W.R."/>
            <person name="Paulsen I."/>
            <person name="Potashkin J."/>
            <person name="Shpakovski G.V."/>
            <person name="Ussery D."/>
            <person name="Barrell B.G."/>
            <person name="Nurse P."/>
        </authorList>
    </citation>
    <scope>NUCLEOTIDE SEQUENCE [LARGE SCALE GENOMIC DNA]</scope>
    <source>
        <strain>972 / ATCC 24843</strain>
    </source>
</reference>
<reference key="3">
    <citation type="journal article" date="2006" name="Nat. Biotechnol.">
        <title>ORFeome cloning and global analysis of protein localization in the fission yeast Schizosaccharomyces pombe.</title>
        <authorList>
            <person name="Matsuyama A."/>
            <person name="Arai R."/>
            <person name="Yashiroda Y."/>
            <person name="Shirai A."/>
            <person name="Kamata A."/>
            <person name="Sekido S."/>
            <person name="Kobayashi Y."/>
            <person name="Hashimoto A."/>
            <person name="Hamamoto M."/>
            <person name="Hiraoka Y."/>
            <person name="Horinouchi S."/>
            <person name="Yoshida M."/>
        </authorList>
    </citation>
    <scope>SUBCELLULAR LOCATION [LARGE SCALE ANALYSIS]</scope>
</reference>
<proteinExistence type="evidence at protein level"/>